<reference key="1">
    <citation type="submission" date="2007-03" db="EMBL/GenBank/DDBJ databases">
        <title>Complete sequence of chromosome 1 of Burkholderia vietnamiensis G4.</title>
        <authorList>
            <consortium name="US DOE Joint Genome Institute"/>
            <person name="Copeland A."/>
            <person name="Lucas S."/>
            <person name="Lapidus A."/>
            <person name="Barry K."/>
            <person name="Detter J.C."/>
            <person name="Glavina del Rio T."/>
            <person name="Hammon N."/>
            <person name="Israni S."/>
            <person name="Dalin E."/>
            <person name="Tice H."/>
            <person name="Pitluck S."/>
            <person name="Chain P."/>
            <person name="Malfatti S."/>
            <person name="Shin M."/>
            <person name="Vergez L."/>
            <person name="Schmutz J."/>
            <person name="Larimer F."/>
            <person name="Land M."/>
            <person name="Hauser L."/>
            <person name="Kyrpides N."/>
            <person name="Tiedje J."/>
            <person name="Richardson P."/>
        </authorList>
    </citation>
    <scope>NUCLEOTIDE SEQUENCE [LARGE SCALE GENOMIC DNA]</scope>
    <source>
        <strain>G4 / LMG 22486</strain>
    </source>
</reference>
<organism>
    <name type="scientific">Burkholderia vietnamiensis (strain G4 / LMG 22486)</name>
    <name type="common">Burkholderia cepacia (strain R1808)</name>
    <dbReference type="NCBI Taxonomy" id="269482"/>
    <lineage>
        <taxon>Bacteria</taxon>
        <taxon>Pseudomonadati</taxon>
        <taxon>Pseudomonadota</taxon>
        <taxon>Betaproteobacteria</taxon>
        <taxon>Burkholderiales</taxon>
        <taxon>Burkholderiaceae</taxon>
        <taxon>Burkholderia</taxon>
        <taxon>Burkholderia cepacia complex</taxon>
    </lineage>
</organism>
<sequence length="728" mass="79043">MSTESKCPFNHTAAGGTSNHDWWPNRLNLEVLHRHSALSDPMDAEFDYAQAFKQLDLAAVKRDLHALMTMSQDWWPADFGHYGGLFVRMAWHGAGTYRIADGRGGAGGGQQRFAPLNSWPDNGNLDKARRLLWPIKQKYGRNISWADLFILTGNVALESMGFKTFGYGGGRADTWEPDDVYWGSEKIWLELSGGPNSRYSGDRDLENPLAAVQMGLIYVNPEGPDGKPDPVAAARDIRDTFARMAMNDEETVALIAGGHTFGKTHGAGPASHVGAEPEAAGIEQQGLGWKSTYGSGKAGDAITSGLEVTWTSTPTQWSNDFFKHLFSYEWELTKSPAGAHQWVAKDAEAVIPDAFDPSKKHRPTMLTTDLSLRFDPAYEKISRRFYENPDEFADAFARAWFKLTHRDMGPRSRYLGPEVPAEELLWQDPIPAVDHPLIDDADAAALKAKILATGLTVAQLVSTAWASASTFRGSDKRGGANGARIRLAPQKDWAVNQPAALAAVLETLEGVQKAFNDAQTGGKKVSLADLIVLAGAAGVEQAAKQAGVAVTVPFAAGRMDASQEQTDVDAMAVLEPVADGFRNYLKAAYKTPAEALLVDKAQLLTLTAPEMTVLIGGLRVLGANAGGAQHGVFTDRPGTLSNDFFVNLLDMGTEWKPASAANDVFEGRDRASGQLKWTGTRVDLIFGSHSQLRALAEVYGSADANEKFVRDFVAAWNKVMNLDRFDLA</sequence>
<proteinExistence type="inferred from homology"/>
<protein>
    <recommendedName>
        <fullName evidence="1">Catalase-peroxidase 1</fullName>
        <shortName evidence="1">CP 1</shortName>
        <ecNumber evidence="1">1.11.1.21</ecNumber>
    </recommendedName>
    <alternativeName>
        <fullName evidence="1">Peroxidase/catalase 1</fullName>
    </alternativeName>
</protein>
<keyword id="KW-0349">Heme</keyword>
<keyword id="KW-0376">Hydrogen peroxide</keyword>
<keyword id="KW-0408">Iron</keyword>
<keyword id="KW-0479">Metal-binding</keyword>
<keyword id="KW-0560">Oxidoreductase</keyword>
<keyword id="KW-0575">Peroxidase</keyword>
<gene>
    <name evidence="1" type="primary">katG1</name>
    <name type="ordered locus">Bcep1808_0687</name>
</gene>
<dbReference type="EC" id="1.11.1.21" evidence="1"/>
<dbReference type="EMBL" id="CP000614">
    <property type="protein sequence ID" value="ABO53699.1"/>
    <property type="molecule type" value="Genomic_DNA"/>
</dbReference>
<dbReference type="SMR" id="A4JBP6"/>
<dbReference type="KEGG" id="bvi:Bcep1808_0687"/>
<dbReference type="eggNOG" id="COG0376">
    <property type="taxonomic scope" value="Bacteria"/>
</dbReference>
<dbReference type="HOGENOM" id="CLU_025424_2_0_4"/>
<dbReference type="Proteomes" id="UP000002287">
    <property type="component" value="Chromosome 1"/>
</dbReference>
<dbReference type="GO" id="GO:0005829">
    <property type="term" value="C:cytosol"/>
    <property type="evidence" value="ECO:0007669"/>
    <property type="project" value="TreeGrafter"/>
</dbReference>
<dbReference type="GO" id="GO:0004096">
    <property type="term" value="F:catalase activity"/>
    <property type="evidence" value="ECO:0007669"/>
    <property type="project" value="UniProtKB-UniRule"/>
</dbReference>
<dbReference type="GO" id="GO:0020037">
    <property type="term" value="F:heme binding"/>
    <property type="evidence" value="ECO:0007669"/>
    <property type="project" value="InterPro"/>
</dbReference>
<dbReference type="GO" id="GO:0046872">
    <property type="term" value="F:metal ion binding"/>
    <property type="evidence" value="ECO:0007669"/>
    <property type="project" value="UniProtKB-KW"/>
</dbReference>
<dbReference type="GO" id="GO:0070301">
    <property type="term" value="P:cellular response to hydrogen peroxide"/>
    <property type="evidence" value="ECO:0007669"/>
    <property type="project" value="TreeGrafter"/>
</dbReference>
<dbReference type="GO" id="GO:0042744">
    <property type="term" value="P:hydrogen peroxide catabolic process"/>
    <property type="evidence" value="ECO:0007669"/>
    <property type="project" value="UniProtKB-KW"/>
</dbReference>
<dbReference type="CDD" id="cd00649">
    <property type="entry name" value="catalase_peroxidase_1"/>
    <property type="match status" value="1"/>
</dbReference>
<dbReference type="CDD" id="cd08200">
    <property type="entry name" value="catalase_peroxidase_2"/>
    <property type="match status" value="1"/>
</dbReference>
<dbReference type="FunFam" id="1.10.420.10:FF:000002">
    <property type="entry name" value="Catalase-peroxidase"/>
    <property type="match status" value="1"/>
</dbReference>
<dbReference type="FunFam" id="1.10.420.10:FF:000004">
    <property type="entry name" value="Catalase-peroxidase"/>
    <property type="match status" value="1"/>
</dbReference>
<dbReference type="FunFam" id="1.10.520.10:FF:000002">
    <property type="entry name" value="Catalase-peroxidase"/>
    <property type="match status" value="1"/>
</dbReference>
<dbReference type="Gene3D" id="1.10.520.10">
    <property type="match status" value="2"/>
</dbReference>
<dbReference type="Gene3D" id="1.10.420.10">
    <property type="entry name" value="Peroxidase, domain 2"/>
    <property type="match status" value="2"/>
</dbReference>
<dbReference type="HAMAP" id="MF_01961">
    <property type="entry name" value="Catal_peroxid"/>
    <property type="match status" value="1"/>
</dbReference>
<dbReference type="InterPro" id="IPR000763">
    <property type="entry name" value="Catalase_peroxidase"/>
</dbReference>
<dbReference type="InterPro" id="IPR002016">
    <property type="entry name" value="Haem_peroxidase"/>
</dbReference>
<dbReference type="InterPro" id="IPR010255">
    <property type="entry name" value="Haem_peroxidase_sf"/>
</dbReference>
<dbReference type="InterPro" id="IPR019794">
    <property type="entry name" value="Peroxidases_AS"/>
</dbReference>
<dbReference type="InterPro" id="IPR019793">
    <property type="entry name" value="Peroxidases_heam-ligand_BS"/>
</dbReference>
<dbReference type="NCBIfam" id="TIGR00198">
    <property type="entry name" value="cat_per_HPI"/>
    <property type="match status" value="1"/>
</dbReference>
<dbReference type="NCBIfam" id="NF011635">
    <property type="entry name" value="PRK15061.1"/>
    <property type="match status" value="1"/>
</dbReference>
<dbReference type="PANTHER" id="PTHR30555:SF0">
    <property type="entry name" value="CATALASE-PEROXIDASE"/>
    <property type="match status" value="1"/>
</dbReference>
<dbReference type="PANTHER" id="PTHR30555">
    <property type="entry name" value="HYDROPEROXIDASE I, BIFUNCTIONAL CATALASE-PEROXIDASE"/>
    <property type="match status" value="1"/>
</dbReference>
<dbReference type="Pfam" id="PF00141">
    <property type="entry name" value="peroxidase"/>
    <property type="match status" value="2"/>
</dbReference>
<dbReference type="PRINTS" id="PR00460">
    <property type="entry name" value="BPEROXIDASE"/>
</dbReference>
<dbReference type="PRINTS" id="PR00458">
    <property type="entry name" value="PEROXIDASE"/>
</dbReference>
<dbReference type="SUPFAM" id="SSF48113">
    <property type="entry name" value="Heme-dependent peroxidases"/>
    <property type="match status" value="2"/>
</dbReference>
<dbReference type="PROSITE" id="PS00435">
    <property type="entry name" value="PEROXIDASE_1"/>
    <property type="match status" value="1"/>
</dbReference>
<dbReference type="PROSITE" id="PS00436">
    <property type="entry name" value="PEROXIDASE_2"/>
    <property type="match status" value="1"/>
</dbReference>
<dbReference type="PROSITE" id="PS50873">
    <property type="entry name" value="PEROXIDASE_4"/>
    <property type="match status" value="1"/>
</dbReference>
<name>KATG1_BURVG</name>
<evidence type="ECO:0000255" key="1">
    <source>
        <dbReference type="HAMAP-Rule" id="MF_01961"/>
    </source>
</evidence>
<accession>A4JBP6</accession>
<comment type="function">
    <text evidence="1">Bifunctional enzyme with both catalase and broad-spectrum peroxidase activity.</text>
</comment>
<comment type="catalytic activity">
    <reaction evidence="1">
        <text>H2O2 + AH2 = A + 2 H2O</text>
        <dbReference type="Rhea" id="RHEA:30275"/>
        <dbReference type="ChEBI" id="CHEBI:13193"/>
        <dbReference type="ChEBI" id="CHEBI:15377"/>
        <dbReference type="ChEBI" id="CHEBI:16240"/>
        <dbReference type="ChEBI" id="CHEBI:17499"/>
        <dbReference type="EC" id="1.11.1.21"/>
    </reaction>
</comment>
<comment type="catalytic activity">
    <reaction evidence="1">
        <text>2 H2O2 = O2 + 2 H2O</text>
        <dbReference type="Rhea" id="RHEA:20309"/>
        <dbReference type="ChEBI" id="CHEBI:15377"/>
        <dbReference type="ChEBI" id="CHEBI:15379"/>
        <dbReference type="ChEBI" id="CHEBI:16240"/>
        <dbReference type="EC" id="1.11.1.21"/>
    </reaction>
</comment>
<comment type="cofactor">
    <cofactor evidence="1">
        <name>heme b</name>
        <dbReference type="ChEBI" id="CHEBI:60344"/>
    </cofactor>
    <text evidence="1">Binds 1 heme b (iron(II)-protoporphyrin IX) group per dimer.</text>
</comment>
<comment type="subunit">
    <text evidence="1">Homodimer or homotetramer.</text>
</comment>
<comment type="PTM">
    <text evidence="1">Formation of the three residue Trp-Tyr-Met cross-link is important for the catalase, but not the peroxidase activity of the enzyme.</text>
</comment>
<comment type="similarity">
    <text evidence="1">Belongs to the peroxidase family. Peroxidase/catalase subfamily.</text>
</comment>
<feature type="chain" id="PRO_0000354752" description="Catalase-peroxidase 1">
    <location>
        <begin position="1"/>
        <end position="728"/>
    </location>
</feature>
<feature type="active site" description="Proton acceptor" evidence="1">
    <location>
        <position position="92"/>
    </location>
</feature>
<feature type="binding site" description="axial binding residue" evidence="1">
    <location>
        <position position="259"/>
    </location>
    <ligand>
        <name>heme b</name>
        <dbReference type="ChEBI" id="CHEBI:60344"/>
    </ligand>
    <ligandPart>
        <name>Fe</name>
        <dbReference type="ChEBI" id="CHEBI:18248"/>
    </ligandPart>
</feature>
<feature type="site" description="Transition state stabilizer" evidence="1">
    <location>
        <position position="88"/>
    </location>
</feature>
<feature type="cross-link" description="Tryptophyl-tyrosyl-methioninium (Trp-Tyr) (with M-244)" evidence="1">
    <location>
        <begin position="91"/>
        <end position="218"/>
    </location>
</feature>
<feature type="cross-link" description="Tryptophyl-tyrosyl-methioninium (Tyr-Met) (with W-91)" evidence="1">
    <location>
        <begin position="218"/>
        <end position="244"/>
    </location>
</feature>